<sequence>MADSRPDPESEPDSVFPREVGLFADCYSEKSRFCFCGHVLNITENFGSRLGVAARVWDAALSLCNYFESQNVDFRGKKVIELGAGTGIVGILAALQGGDVTITDLPLVLEQIQGNVQANVPPGGRAQVRALSWGIDQHVFPGDYDLVLGADIVYLEPTFPLLLGTLRHLCGPHGTIYLASKMREEHGTESFFQHLLPQHFQLELAQRDEDENVNIYRARHRGPRPA</sequence>
<accession>A4FV98</accession>
<keyword id="KW-0963">Cytoplasm</keyword>
<keyword id="KW-0206">Cytoskeleton</keyword>
<keyword id="KW-0489">Methyltransferase</keyword>
<keyword id="KW-1185">Reference proteome</keyword>
<keyword id="KW-0949">S-adenosyl-L-methionine</keyword>
<keyword id="KW-0808">Transferase</keyword>
<reference key="1">
    <citation type="submission" date="2006-09" db="EMBL/GenBank/DDBJ databases">
        <authorList>
            <consortium name="NIH - Mammalian Gene Collection (MGC) project"/>
        </authorList>
    </citation>
    <scope>NUCLEOTIDE SEQUENCE [LARGE SCALE MRNA]</scope>
    <source>
        <strain>Hereford</strain>
        <tissue>Fetal skin</tissue>
    </source>
</reference>
<name>EFMT3_BOVIN</name>
<organism>
    <name type="scientific">Bos taurus</name>
    <name type="common">Bovine</name>
    <dbReference type="NCBI Taxonomy" id="9913"/>
    <lineage>
        <taxon>Eukaryota</taxon>
        <taxon>Metazoa</taxon>
        <taxon>Chordata</taxon>
        <taxon>Craniata</taxon>
        <taxon>Vertebrata</taxon>
        <taxon>Euteleostomi</taxon>
        <taxon>Mammalia</taxon>
        <taxon>Eutheria</taxon>
        <taxon>Laurasiatheria</taxon>
        <taxon>Artiodactyla</taxon>
        <taxon>Ruminantia</taxon>
        <taxon>Pecora</taxon>
        <taxon>Bovidae</taxon>
        <taxon>Bovinae</taxon>
        <taxon>Bos</taxon>
    </lineage>
</organism>
<dbReference type="EC" id="2.1.1.-" evidence="2"/>
<dbReference type="EMBL" id="BC123899">
    <property type="protein sequence ID" value="AAI23900.1"/>
    <property type="molecule type" value="mRNA"/>
</dbReference>
<dbReference type="RefSeq" id="NP_001096810.1">
    <property type="nucleotide sequence ID" value="NM_001103340.1"/>
</dbReference>
<dbReference type="SMR" id="A4FV98"/>
<dbReference type="FunCoup" id="A4FV98">
    <property type="interactions" value="192"/>
</dbReference>
<dbReference type="PaxDb" id="9913-ENSBTAP00000022493"/>
<dbReference type="Ensembl" id="ENSBTAT00000022493.5">
    <property type="protein sequence ID" value="ENSBTAP00000022493.3"/>
    <property type="gene ID" value="ENSBTAG00000016910.6"/>
</dbReference>
<dbReference type="GeneID" id="100125307"/>
<dbReference type="KEGG" id="bta:100125307"/>
<dbReference type="CTD" id="25895"/>
<dbReference type="VEuPathDB" id="HostDB:ENSBTAG00000016910"/>
<dbReference type="VGNC" id="VGNC:50099">
    <property type="gene designation" value="EEF1AKMT3"/>
</dbReference>
<dbReference type="eggNOG" id="KOG2793">
    <property type="taxonomic scope" value="Eukaryota"/>
</dbReference>
<dbReference type="GeneTree" id="ENSGT00940000161297"/>
<dbReference type="HOGENOM" id="CLU_055721_4_0_1"/>
<dbReference type="InParanoid" id="A4FV98"/>
<dbReference type="OMA" id="HRDDKQN"/>
<dbReference type="OrthoDB" id="413520at2759"/>
<dbReference type="TreeFam" id="TF313206"/>
<dbReference type="Proteomes" id="UP000009136">
    <property type="component" value="Chromosome 5"/>
</dbReference>
<dbReference type="Bgee" id="ENSBTAG00000016910">
    <property type="expression patterns" value="Expressed in semen and 99 other cell types or tissues"/>
</dbReference>
<dbReference type="GO" id="GO:0005813">
    <property type="term" value="C:centrosome"/>
    <property type="evidence" value="ECO:0000250"/>
    <property type="project" value="UniProtKB"/>
</dbReference>
<dbReference type="GO" id="GO:0005694">
    <property type="term" value="C:chromosome"/>
    <property type="evidence" value="ECO:0007669"/>
    <property type="project" value="Ensembl"/>
</dbReference>
<dbReference type="GO" id="GO:0005737">
    <property type="term" value="C:cytoplasm"/>
    <property type="evidence" value="ECO:0000250"/>
    <property type="project" value="UniProtKB"/>
</dbReference>
<dbReference type="GO" id="GO:0005829">
    <property type="term" value="C:cytosol"/>
    <property type="evidence" value="ECO:0000318"/>
    <property type="project" value="GO_Central"/>
</dbReference>
<dbReference type="GO" id="GO:0005654">
    <property type="term" value="C:nucleoplasm"/>
    <property type="evidence" value="ECO:0007669"/>
    <property type="project" value="Ensembl"/>
</dbReference>
<dbReference type="GO" id="GO:0032991">
    <property type="term" value="C:protein-containing complex"/>
    <property type="evidence" value="ECO:0000318"/>
    <property type="project" value="GO_Central"/>
</dbReference>
<dbReference type="GO" id="GO:0031072">
    <property type="term" value="F:heat shock protein binding"/>
    <property type="evidence" value="ECO:0007669"/>
    <property type="project" value="Ensembl"/>
</dbReference>
<dbReference type="GO" id="GO:0008168">
    <property type="term" value="F:methyltransferase activity"/>
    <property type="evidence" value="ECO:0000250"/>
    <property type="project" value="UniProtKB"/>
</dbReference>
<dbReference type="GO" id="GO:0016279">
    <property type="term" value="F:protein-lysine N-methyltransferase activity"/>
    <property type="evidence" value="ECO:0000250"/>
    <property type="project" value="UniProtKB"/>
</dbReference>
<dbReference type="GO" id="GO:0018022">
    <property type="term" value="P:peptidyl-lysine methylation"/>
    <property type="evidence" value="ECO:0000250"/>
    <property type="project" value="UniProtKB"/>
</dbReference>
<dbReference type="CDD" id="cd02440">
    <property type="entry name" value="AdoMet_MTases"/>
    <property type="match status" value="1"/>
</dbReference>
<dbReference type="FunFam" id="3.40.50.150:FF:000160">
    <property type="entry name" value="EEF1A lysine methyltransferase 3"/>
    <property type="match status" value="1"/>
</dbReference>
<dbReference type="Gene3D" id="3.40.50.150">
    <property type="entry name" value="Vaccinia Virus protein VP39"/>
    <property type="match status" value="1"/>
</dbReference>
<dbReference type="InterPro" id="IPR019410">
    <property type="entry name" value="Methyltransf_16"/>
</dbReference>
<dbReference type="InterPro" id="IPR029063">
    <property type="entry name" value="SAM-dependent_MTases_sf"/>
</dbReference>
<dbReference type="PANTHER" id="PTHR14614:SF5">
    <property type="entry name" value="EEF1A LYSINE METHYLTRANSFERASE 3"/>
    <property type="match status" value="1"/>
</dbReference>
<dbReference type="PANTHER" id="PTHR14614">
    <property type="entry name" value="HEPATOCELLULAR CARCINOMA-ASSOCIATED ANTIGEN"/>
    <property type="match status" value="1"/>
</dbReference>
<dbReference type="Pfam" id="PF10294">
    <property type="entry name" value="Methyltransf_16"/>
    <property type="match status" value="1"/>
</dbReference>
<dbReference type="SUPFAM" id="SSF53335">
    <property type="entry name" value="S-adenosyl-L-methionine-dependent methyltransferases"/>
    <property type="match status" value="1"/>
</dbReference>
<comment type="function">
    <text evidence="2">Protein-lysine methyltransferase that selectively mono-, di- and trimethylates 'Lys-165' of the translation elongation factors EEF1A1 and EEF1A2 in an aminoacyl-tRNA and GTP-dependent manner. EEF1A1 methylation by EEF1AKMT3 is dynamic as well as inducible by stress conditions, such as ER-stress, and plays a regulatory role on mRNA translation.</text>
</comment>
<comment type="catalytic activity">
    <reaction evidence="2">
        <text>L-lysyl-[protein] + 3 S-adenosyl-L-methionine = N(6),N(6),N(6)-trimethyl-L-lysyl-[protein] + 3 S-adenosyl-L-homocysteine + 3 H(+)</text>
        <dbReference type="Rhea" id="RHEA:54192"/>
        <dbReference type="Rhea" id="RHEA-COMP:9752"/>
        <dbReference type="Rhea" id="RHEA-COMP:13826"/>
        <dbReference type="ChEBI" id="CHEBI:15378"/>
        <dbReference type="ChEBI" id="CHEBI:29969"/>
        <dbReference type="ChEBI" id="CHEBI:57856"/>
        <dbReference type="ChEBI" id="CHEBI:59789"/>
        <dbReference type="ChEBI" id="CHEBI:61961"/>
    </reaction>
    <physiologicalReaction direction="left-to-right" evidence="2">
        <dbReference type="Rhea" id="RHEA:54193"/>
    </physiologicalReaction>
</comment>
<comment type="catalytic activity">
    <reaction evidence="2">
        <text>L-lysyl-[protein] + S-adenosyl-L-methionine = N(6)-methyl-L-lysyl-[protein] + S-adenosyl-L-homocysteine + H(+)</text>
        <dbReference type="Rhea" id="RHEA:51736"/>
        <dbReference type="Rhea" id="RHEA-COMP:9752"/>
        <dbReference type="Rhea" id="RHEA-COMP:13053"/>
        <dbReference type="ChEBI" id="CHEBI:15378"/>
        <dbReference type="ChEBI" id="CHEBI:29969"/>
        <dbReference type="ChEBI" id="CHEBI:57856"/>
        <dbReference type="ChEBI" id="CHEBI:59789"/>
        <dbReference type="ChEBI" id="CHEBI:61929"/>
    </reaction>
    <physiologicalReaction direction="left-to-right" evidence="2">
        <dbReference type="Rhea" id="RHEA:51737"/>
    </physiologicalReaction>
</comment>
<comment type="catalytic activity">
    <reaction evidence="2">
        <text>N(6)-methyl-L-lysyl-[protein] + S-adenosyl-L-methionine = N(6),N(6)-dimethyl-L-lysyl-[protein] + S-adenosyl-L-homocysteine + H(+)</text>
        <dbReference type="Rhea" id="RHEA:54196"/>
        <dbReference type="Rhea" id="RHEA-COMP:13053"/>
        <dbReference type="Rhea" id="RHEA-COMP:13827"/>
        <dbReference type="ChEBI" id="CHEBI:15378"/>
        <dbReference type="ChEBI" id="CHEBI:57856"/>
        <dbReference type="ChEBI" id="CHEBI:59789"/>
        <dbReference type="ChEBI" id="CHEBI:61929"/>
        <dbReference type="ChEBI" id="CHEBI:61976"/>
    </reaction>
    <physiologicalReaction direction="left-to-right" evidence="2">
        <dbReference type="Rhea" id="RHEA:54197"/>
    </physiologicalReaction>
</comment>
<comment type="catalytic activity">
    <reaction evidence="2">
        <text>N(6),N(6)-dimethyl-L-lysyl-[protein] + S-adenosyl-L-methionine = N(6),N(6),N(6)-trimethyl-L-lysyl-[protein] + S-adenosyl-L-homocysteine + H(+)</text>
        <dbReference type="Rhea" id="RHEA:54200"/>
        <dbReference type="Rhea" id="RHEA-COMP:13826"/>
        <dbReference type="Rhea" id="RHEA-COMP:13827"/>
        <dbReference type="ChEBI" id="CHEBI:15378"/>
        <dbReference type="ChEBI" id="CHEBI:57856"/>
        <dbReference type="ChEBI" id="CHEBI:59789"/>
        <dbReference type="ChEBI" id="CHEBI:61961"/>
        <dbReference type="ChEBI" id="CHEBI:61976"/>
    </reaction>
    <physiologicalReaction direction="left-to-right" evidence="2">
        <dbReference type="Rhea" id="RHEA:54201"/>
    </physiologicalReaction>
</comment>
<comment type="subunit">
    <text evidence="1">Interacts with members of the heat shock protein 70 and 90 families and of the TCP-1 chaperonin family, as well as with HSPD1, STIP1 and tubulin; at least some of these proteins may be methylation substrates.</text>
</comment>
<comment type="subcellular location">
    <subcellularLocation>
        <location evidence="2">Cytoplasm</location>
    </subcellularLocation>
    <subcellularLocation>
        <location evidence="2">Cytoplasm</location>
        <location evidence="2">Cytoskeleton</location>
        <location evidence="2">Microtubule organizing center</location>
        <location evidence="2">Centrosome</location>
    </subcellularLocation>
</comment>
<comment type="similarity">
    <text evidence="3">Belongs to the methyltransferase superfamily. METTL21 family.</text>
</comment>
<protein>
    <recommendedName>
        <fullName evidence="2">EEF1A lysine methyltransferase 3</fullName>
        <ecNumber evidence="2">2.1.1.-</ecNumber>
    </recommendedName>
    <alternativeName>
        <fullName>Methyltransferase-like protein 21B</fullName>
    </alternativeName>
    <alternativeName>
        <fullName evidence="2">Protein-lysine methyltransferase METTL21B</fullName>
    </alternativeName>
</protein>
<gene>
    <name evidence="2" type="primary">EEF1AKMT3</name>
    <name type="synonym">FAM119B</name>
    <name evidence="2" type="synonym">METTL21B</name>
</gene>
<evidence type="ECO:0000250" key="1"/>
<evidence type="ECO:0000250" key="2">
    <source>
        <dbReference type="UniProtKB" id="Q96AZ1"/>
    </source>
</evidence>
<evidence type="ECO:0000305" key="3"/>
<feature type="chain" id="PRO_0000291849" description="EEF1A lysine methyltransferase 3">
    <location>
        <begin position="1"/>
        <end position="226"/>
    </location>
</feature>
<feature type="binding site" evidence="2">
    <location>
        <position position="57"/>
    </location>
    <ligand>
        <name>S-adenosyl-L-methionine</name>
        <dbReference type="ChEBI" id="CHEBI:59789"/>
    </ligand>
</feature>
<feature type="binding site" evidence="2">
    <location>
        <begin position="83"/>
        <end position="85"/>
    </location>
    <ligand>
        <name>S-adenosyl-L-methionine</name>
        <dbReference type="ChEBI" id="CHEBI:59789"/>
    </ligand>
</feature>
<feature type="binding site" evidence="2">
    <location>
        <position position="104"/>
    </location>
    <ligand>
        <name>S-adenosyl-L-methionine</name>
        <dbReference type="ChEBI" id="CHEBI:59789"/>
    </ligand>
</feature>
<feature type="binding site" evidence="2">
    <location>
        <position position="133"/>
    </location>
    <ligand>
        <name>S-adenosyl-L-methionine</name>
        <dbReference type="ChEBI" id="CHEBI:59789"/>
    </ligand>
</feature>
<feature type="binding site" evidence="1">
    <location>
        <position position="150"/>
    </location>
    <ligand>
        <name>S-adenosyl-L-methionine</name>
        <dbReference type="ChEBI" id="CHEBI:59789"/>
    </ligand>
</feature>
<proteinExistence type="evidence at transcript level"/>